<reference key="1">
    <citation type="journal article" date="2010" name="ISME J.">
        <title>The complete genome sequence of the algal symbiont Dinoroseobacter shibae: a hitchhiker's guide to life in the sea.</title>
        <authorList>
            <person name="Wagner-Dobler I."/>
            <person name="Ballhausen B."/>
            <person name="Berger M."/>
            <person name="Brinkhoff T."/>
            <person name="Buchholz I."/>
            <person name="Bunk B."/>
            <person name="Cypionka H."/>
            <person name="Daniel R."/>
            <person name="Drepper T."/>
            <person name="Gerdts G."/>
            <person name="Hahnke S."/>
            <person name="Han C."/>
            <person name="Jahn D."/>
            <person name="Kalhoefer D."/>
            <person name="Kiss H."/>
            <person name="Klenk H.P."/>
            <person name="Kyrpides N."/>
            <person name="Liebl W."/>
            <person name="Liesegang H."/>
            <person name="Meincke L."/>
            <person name="Pati A."/>
            <person name="Petersen J."/>
            <person name="Piekarski T."/>
            <person name="Pommerenke C."/>
            <person name="Pradella S."/>
            <person name="Pukall R."/>
            <person name="Rabus R."/>
            <person name="Stackebrandt E."/>
            <person name="Thole S."/>
            <person name="Thompson L."/>
            <person name="Tielen P."/>
            <person name="Tomasch J."/>
            <person name="von Jan M."/>
            <person name="Wanphrut N."/>
            <person name="Wichels A."/>
            <person name="Zech H."/>
            <person name="Simon M."/>
        </authorList>
    </citation>
    <scope>NUCLEOTIDE SEQUENCE [LARGE SCALE GENOMIC DNA]</scope>
    <source>
        <strain>DSM 16493 / NCIMB 14021 / DFL 12</strain>
    </source>
</reference>
<keyword id="KW-0143">Chaperone</keyword>
<keyword id="KW-0963">Cytoplasm</keyword>
<keyword id="KW-0653">Protein transport</keyword>
<keyword id="KW-1185">Reference proteome</keyword>
<keyword id="KW-0811">Translocation</keyword>
<keyword id="KW-0813">Transport</keyword>
<sequence>MADETTNGAAAPADQQQQPVMPTLKIMAQFIRDMSFENIAAQKGVQGEGQPDIQVQVNLDAKKRTVEKQFEVAIKLNINAKTKESGDMIFGLELDYAGIFFIDNVPDEQMHPFLLIECPRMIFPFVRRIVSDVTRDGGFPPLNLDQIDFVALYRQEIARRAAAQQAAPSAEV</sequence>
<protein>
    <recommendedName>
        <fullName evidence="1">Protein-export protein SecB</fullName>
    </recommendedName>
</protein>
<name>SECB_DINSH</name>
<proteinExistence type="inferred from homology"/>
<evidence type="ECO:0000255" key="1">
    <source>
        <dbReference type="HAMAP-Rule" id="MF_00821"/>
    </source>
</evidence>
<organism>
    <name type="scientific">Dinoroseobacter shibae (strain DSM 16493 / NCIMB 14021 / DFL 12)</name>
    <dbReference type="NCBI Taxonomy" id="398580"/>
    <lineage>
        <taxon>Bacteria</taxon>
        <taxon>Pseudomonadati</taxon>
        <taxon>Pseudomonadota</taxon>
        <taxon>Alphaproteobacteria</taxon>
        <taxon>Rhodobacterales</taxon>
        <taxon>Roseobacteraceae</taxon>
        <taxon>Dinoroseobacter</taxon>
    </lineage>
</organism>
<accession>A8LPB5</accession>
<gene>
    <name evidence="1" type="primary">secB</name>
    <name type="ordered locus">Dshi_3447</name>
</gene>
<comment type="function">
    <text evidence="1">One of the proteins required for the normal export of preproteins out of the cell cytoplasm. It is a molecular chaperone that binds to a subset of precursor proteins, maintaining them in a translocation-competent state. It also specifically binds to its receptor SecA.</text>
</comment>
<comment type="subunit">
    <text evidence="1">Homotetramer, a dimer of dimers. One homotetramer interacts with 1 SecA dimer.</text>
</comment>
<comment type="subcellular location">
    <subcellularLocation>
        <location evidence="1">Cytoplasm</location>
    </subcellularLocation>
</comment>
<comment type="similarity">
    <text evidence="1">Belongs to the SecB family.</text>
</comment>
<feature type="chain" id="PRO_1000083856" description="Protein-export protein SecB">
    <location>
        <begin position="1"/>
        <end position="172"/>
    </location>
</feature>
<dbReference type="EMBL" id="CP000830">
    <property type="protein sequence ID" value="ABV95180.1"/>
    <property type="molecule type" value="Genomic_DNA"/>
</dbReference>
<dbReference type="RefSeq" id="WP_012180104.1">
    <property type="nucleotide sequence ID" value="NC_009952.1"/>
</dbReference>
<dbReference type="SMR" id="A8LPB5"/>
<dbReference type="STRING" id="398580.Dshi_3447"/>
<dbReference type="KEGG" id="dsh:Dshi_3447"/>
<dbReference type="eggNOG" id="COG1952">
    <property type="taxonomic scope" value="Bacteria"/>
</dbReference>
<dbReference type="HOGENOM" id="CLU_111574_0_0_5"/>
<dbReference type="OrthoDB" id="9795145at2"/>
<dbReference type="Proteomes" id="UP000006833">
    <property type="component" value="Chromosome"/>
</dbReference>
<dbReference type="GO" id="GO:0005737">
    <property type="term" value="C:cytoplasm"/>
    <property type="evidence" value="ECO:0007669"/>
    <property type="project" value="UniProtKB-SubCell"/>
</dbReference>
<dbReference type="GO" id="GO:0051082">
    <property type="term" value="F:unfolded protein binding"/>
    <property type="evidence" value="ECO:0007669"/>
    <property type="project" value="InterPro"/>
</dbReference>
<dbReference type="GO" id="GO:0006457">
    <property type="term" value="P:protein folding"/>
    <property type="evidence" value="ECO:0007669"/>
    <property type="project" value="UniProtKB-UniRule"/>
</dbReference>
<dbReference type="GO" id="GO:0051262">
    <property type="term" value="P:protein tetramerization"/>
    <property type="evidence" value="ECO:0007669"/>
    <property type="project" value="InterPro"/>
</dbReference>
<dbReference type="GO" id="GO:0015031">
    <property type="term" value="P:protein transport"/>
    <property type="evidence" value="ECO:0007669"/>
    <property type="project" value="UniProtKB-UniRule"/>
</dbReference>
<dbReference type="Gene3D" id="3.10.420.10">
    <property type="entry name" value="SecB-like"/>
    <property type="match status" value="1"/>
</dbReference>
<dbReference type="HAMAP" id="MF_00821">
    <property type="entry name" value="SecB"/>
    <property type="match status" value="1"/>
</dbReference>
<dbReference type="InterPro" id="IPR003708">
    <property type="entry name" value="SecB"/>
</dbReference>
<dbReference type="InterPro" id="IPR035958">
    <property type="entry name" value="SecB-like_sf"/>
</dbReference>
<dbReference type="NCBIfam" id="NF004392">
    <property type="entry name" value="PRK05751.1-3"/>
    <property type="match status" value="1"/>
</dbReference>
<dbReference type="NCBIfam" id="TIGR00809">
    <property type="entry name" value="secB"/>
    <property type="match status" value="1"/>
</dbReference>
<dbReference type="PANTHER" id="PTHR36918">
    <property type="match status" value="1"/>
</dbReference>
<dbReference type="PANTHER" id="PTHR36918:SF1">
    <property type="entry name" value="PROTEIN-EXPORT PROTEIN SECB"/>
    <property type="match status" value="1"/>
</dbReference>
<dbReference type="Pfam" id="PF02556">
    <property type="entry name" value="SecB"/>
    <property type="match status" value="1"/>
</dbReference>
<dbReference type="PRINTS" id="PR01594">
    <property type="entry name" value="SECBCHAPRONE"/>
</dbReference>
<dbReference type="SUPFAM" id="SSF54611">
    <property type="entry name" value="SecB-like"/>
    <property type="match status" value="1"/>
</dbReference>